<protein>
    <recommendedName>
        <fullName evidence="1">NADH-quinone oxidoreductase subunit I</fullName>
        <ecNumber evidence="1">7.1.1.-</ecNumber>
    </recommendedName>
    <alternativeName>
        <fullName evidence="1">NADH dehydrogenase I subunit I</fullName>
    </alternativeName>
    <alternativeName>
        <fullName evidence="1">NDH-1 subunit I</fullName>
    </alternativeName>
</protein>
<gene>
    <name evidence="1" type="primary">nuoI</name>
    <name type="ordered locus">RF_1260</name>
</gene>
<keyword id="KW-0004">4Fe-4S</keyword>
<keyword id="KW-0997">Cell inner membrane</keyword>
<keyword id="KW-1003">Cell membrane</keyword>
<keyword id="KW-0408">Iron</keyword>
<keyword id="KW-0411">Iron-sulfur</keyword>
<keyword id="KW-0472">Membrane</keyword>
<keyword id="KW-0479">Metal-binding</keyword>
<keyword id="KW-0520">NAD</keyword>
<keyword id="KW-0874">Quinone</keyword>
<keyword id="KW-0677">Repeat</keyword>
<keyword id="KW-1278">Translocase</keyword>
<keyword id="KW-0830">Ubiquinone</keyword>
<organism>
    <name type="scientific">Rickettsia felis (strain ATCC VR-1525 / URRWXCal2)</name>
    <name type="common">Rickettsia azadi</name>
    <dbReference type="NCBI Taxonomy" id="315456"/>
    <lineage>
        <taxon>Bacteria</taxon>
        <taxon>Pseudomonadati</taxon>
        <taxon>Pseudomonadota</taxon>
        <taxon>Alphaproteobacteria</taxon>
        <taxon>Rickettsiales</taxon>
        <taxon>Rickettsiaceae</taxon>
        <taxon>Rickettsieae</taxon>
        <taxon>Rickettsia</taxon>
        <taxon>spotted fever group</taxon>
    </lineage>
</organism>
<proteinExistence type="inferred from homology"/>
<evidence type="ECO:0000255" key="1">
    <source>
        <dbReference type="HAMAP-Rule" id="MF_01351"/>
    </source>
</evidence>
<comment type="function">
    <text evidence="1">NDH-1 shuttles electrons from NADH, via FMN and iron-sulfur (Fe-S) centers, to quinones in the respiratory chain. The immediate electron acceptor for the enzyme in this species is believed to be ubiquinone. Couples the redox reaction to proton translocation (for every two electrons transferred, four hydrogen ions are translocated across the cytoplasmic membrane), and thus conserves the redox energy in a proton gradient.</text>
</comment>
<comment type="catalytic activity">
    <reaction evidence="1">
        <text>a quinone + NADH + 5 H(+)(in) = a quinol + NAD(+) + 4 H(+)(out)</text>
        <dbReference type="Rhea" id="RHEA:57888"/>
        <dbReference type="ChEBI" id="CHEBI:15378"/>
        <dbReference type="ChEBI" id="CHEBI:24646"/>
        <dbReference type="ChEBI" id="CHEBI:57540"/>
        <dbReference type="ChEBI" id="CHEBI:57945"/>
        <dbReference type="ChEBI" id="CHEBI:132124"/>
    </reaction>
</comment>
<comment type="cofactor">
    <cofactor evidence="1">
        <name>[4Fe-4S] cluster</name>
        <dbReference type="ChEBI" id="CHEBI:49883"/>
    </cofactor>
    <text evidence="1">Binds 2 [4Fe-4S] clusters per subunit.</text>
</comment>
<comment type="subunit">
    <text evidence="1">NDH-1 is composed of 14 different subunits. Subunits NuoA, H, J, K, L, M, N constitute the membrane sector of the complex.</text>
</comment>
<comment type="subcellular location">
    <subcellularLocation>
        <location evidence="1">Cell inner membrane</location>
        <topology evidence="1">Peripheral membrane protein</topology>
    </subcellularLocation>
</comment>
<comment type="similarity">
    <text evidence="1">Belongs to the complex I 23 kDa subunit family.</text>
</comment>
<reference key="1">
    <citation type="journal article" date="2005" name="PLoS Biol.">
        <title>The genome sequence of Rickettsia felis identifies the first putative conjugative plasmid in an obligate intracellular parasite.</title>
        <authorList>
            <person name="Ogata H."/>
            <person name="Renesto P."/>
            <person name="Audic S."/>
            <person name="Robert C."/>
            <person name="Blanc G."/>
            <person name="Fournier P.-E."/>
            <person name="Parinello H."/>
            <person name="Claverie J.-M."/>
            <person name="Raoult D."/>
        </authorList>
    </citation>
    <scope>NUCLEOTIDE SEQUENCE [LARGE SCALE GENOMIC DNA]</scope>
    <source>
        <strain>ATCC VR-1525 / URRWXCal2</strain>
    </source>
</reference>
<dbReference type="EC" id="7.1.1.-" evidence="1"/>
<dbReference type="EMBL" id="CP000053">
    <property type="protein sequence ID" value="AAY62111.1"/>
    <property type="molecule type" value="Genomic_DNA"/>
</dbReference>
<dbReference type="SMR" id="Q4UK24"/>
<dbReference type="STRING" id="315456.RF_1260"/>
<dbReference type="KEGG" id="rfe:RF_1260"/>
<dbReference type="eggNOG" id="COG1143">
    <property type="taxonomic scope" value="Bacteria"/>
</dbReference>
<dbReference type="HOGENOM" id="CLU_067218_5_1_5"/>
<dbReference type="OrthoDB" id="9808559at2"/>
<dbReference type="Proteomes" id="UP000008548">
    <property type="component" value="Chromosome"/>
</dbReference>
<dbReference type="GO" id="GO:0005886">
    <property type="term" value="C:plasma membrane"/>
    <property type="evidence" value="ECO:0007669"/>
    <property type="project" value="UniProtKB-SubCell"/>
</dbReference>
<dbReference type="GO" id="GO:0051539">
    <property type="term" value="F:4 iron, 4 sulfur cluster binding"/>
    <property type="evidence" value="ECO:0007669"/>
    <property type="project" value="UniProtKB-KW"/>
</dbReference>
<dbReference type="GO" id="GO:0005506">
    <property type="term" value="F:iron ion binding"/>
    <property type="evidence" value="ECO:0007669"/>
    <property type="project" value="UniProtKB-UniRule"/>
</dbReference>
<dbReference type="GO" id="GO:0050136">
    <property type="term" value="F:NADH:ubiquinone reductase (non-electrogenic) activity"/>
    <property type="evidence" value="ECO:0007669"/>
    <property type="project" value="UniProtKB-UniRule"/>
</dbReference>
<dbReference type="GO" id="GO:0048038">
    <property type="term" value="F:quinone binding"/>
    <property type="evidence" value="ECO:0007669"/>
    <property type="project" value="UniProtKB-KW"/>
</dbReference>
<dbReference type="GO" id="GO:0009060">
    <property type="term" value="P:aerobic respiration"/>
    <property type="evidence" value="ECO:0007669"/>
    <property type="project" value="TreeGrafter"/>
</dbReference>
<dbReference type="FunFam" id="3.30.70.3270:FF:000001">
    <property type="entry name" value="NADH-quinone oxidoreductase subunit I 1"/>
    <property type="match status" value="1"/>
</dbReference>
<dbReference type="Gene3D" id="3.30.70.3270">
    <property type="match status" value="1"/>
</dbReference>
<dbReference type="HAMAP" id="MF_01351">
    <property type="entry name" value="NDH1_NuoI"/>
    <property type="match status" value="1"/>
</dbReference>
<dbReference type="InterPro" id="IPR017896">
    <property type="entry name" value="4Fe4S_Fe-S-bd"/>
</dbReference>
<dbReference type="InterPro" id="IPR017900">
    <property type="entry name" value="4Fe4S_Fe_S_CS"/>
</dbReference>
<dbReference type="InterPro" id="IPR010226">
    <property type="entry name" value="NADH_quinone_OxRdtase_chainI"/>
</dbReference>
<dbReference type="NCBIfam" id="TIGR01971">
    <property type="entry name" value="NuoI"/>
    <property type="match status" value="1"/>
</dbReference>
<dbReference type="NCBIfam" id="NF004538">
    <property type="entry name" value="PRK05888.1-4"/>
    <property type="match status" value="1"/>
</dbReference>
<dbReference type="NCBIfam" id="NF004539">
    <property type="entry name" value="PRK05888.1-5"/>
    <property type="match status" value="1"/>
</dbReference>
<dbReference type="PANTHER" id="PTHR10849:SF20">
    <property type="entry name" value="NADH DEHYDROGENASE [UBIQUINONE] IRON-SULFUR PROTEIN 8, MITOCHONDRIAL"/>
    <property type="match status" value="1"/>
</dbReference>
<dbReference type="PANTHER" id="PTHR10849">
    <property type="entry name" value="NADH DEHYDROGENASE UBIQUINONE IRON-SULFUR PROTEIN 8, MITOCHONDRIAL"/>
    <property type="match status" value="1"/>
</dbReference>
<dbReference type="Pfam" id="PF12838">
    <property type="entry name" value="Fer4_7"/>
    <property type="match status" value="1"/>
</dbReference>
<dbReference type="SUPFAM" id="SSF54862">
    <property type="entry name" value="4Fe-4S ferredoxins"/>
    <property type="match status" value="1"/>
</dbReference>
<dbReference type="PROSITE" id="PS00198">
    <property type="entry name" value="4FE4S_FER_1"/>
    <property type="match status" value="2"/>
</dbReference>
<dbReference type="PROSITE" id="PS51379">
    <property type="entry name" value="4FE4S_FER_2"/>
    <property type="match status" value="2"/>
</dbReference>
<feature type="chain" id="PRO_0000245737" description="NADH-quinone oxidoreductase subunit I">
    <location>
        <begin position="1"/>
        <end position="159"/>
    </location>
</feature>
<feature type="domain" description="4Fe-4S ferredoxin-type 1" evidence="1">
    <location>
        <begin position="51"/>
        <end position="80"/>
    </location>
</feature>
<feature type="domain" description="4Fe-4S ferredoxin-type 2" evidence="1">
    <location>
        <begin position="90"/>
        <end position="119"/>
    </location>
</feature>
<feature type="binding site" evidence="1">
    <location>
        <position position="60"/>
    </location>
    <ligand>
        <name>[4Fe-4S] cluster</name>
        <dbReference type="ChEBI" id="CHEBI:49883"/>
        <label>1</label>
    </ligand>
</feature>
<feature type="binding site" evidence="1">
    <location>
        <position position="63"/>
    </location>
    <ligand>
        <name>[4Fe-4S] cluster</name>
        <dbReference type="ChEBI" id="CHEBI:49883"/>
        <label>1</label>
    </ligand>
</feature>
<feature type="binding site" evidence="1">
    <location>
        <position position="66"/>
    </location>
    <ligand>
        <name>[4Fe-4S] cluster</name>
        <dbReference type="ChEBI" id="CHEBI:49883"/>
        <label>1</label>
    </ligand>
</feature>
<feature type="binding site" evidence="1">
    <location>
        <position position="70"/>
    </location>
    <ligand>
        <name>[4Fe-4S] cluster</name>
        <dbReference type="ChEBI" id="CHEBI:49883"/>
        <label>2</label>
    </ligand>
</feature>
<feature type="binding site" evidence="1">
    <location>
        <position position="99"/>
    </location>
    <ligand>
        <name>[4Fe-4S] cluster</name>
        <dbReference type="ChEBI" id="CHEBI:49883"/>
        <label>2</label>
    </ligand>
</feature>
<feature type="binding site" evidence="1">
    <location>
        <position position="102"/>
    </location>
    <ligand>
        <name>[4Fe-4S] cluster</name>
        <dbReference type="ChEBI" id="CHEBI:49883"/>
        <label>2</label>
    </ligand>
</feature>
<feature type="binding site" evidence="1">
    <location>
        <position position="105"/>
    </location>
    <ligand>
        <name>[4Fe-4S] cluster</name>
        <dbReference type="ChEBI" id="CHEBI:49883"/>
        <label>2</label>
    </ligand>
</feature>
<feature type="binding site" evidence="1">
    <location>
        <position position="109"/>
    </location>
    <ligand>
        <name>[4Fe-4S] cluster</name>
        <dbReference type="ChEBI" id="CHEBI:49883"/>
        <label>1</label>
    </ligand>
</feature>
<accession>Q4UK24</accession>
<sequence>MINYLKSFFLYEIVRGMALTLKYFFKPKVTINYPYEKSPVSPRFKGEHALRRYENGEERCIACKLCEAICPAQAIVIEADERDDGSRRTTRYDIDMTKCIYCGLCQEACPVDAIVEGPNFEFASLTHTALIYDKERLLQNGDRWEQALASKLHKDYEYR</sequence>
<name>NUOI_RICFE</name>